<gene>
    <name evidence="1" type="primary">pyrE</name>
    <name type="ordered locus">lmo1831</name>
</gene>
<name>PYRE_LISMO</name>
<keyword id="KW-0328">Glycosyltransferase</keyword>
<keyword id="KW-0460">Magnesium</keyword>
<keyword id="KW-0665">Pyrimidine biosynthesis</keyword>
<keyword id="KW-1185">Reference proteome</keyword>
<keyword id="KW-0808">Transferase</keyword>
<accession>Q8Y668</accession>
<comment type="function">
    <text evidence="1">Catalyzes the transfer of a ribosyl phosphate group from 5-phosphoribose 1-diphosphate to orotate, leading to the formation of orotidine monophosphate (OMP).</text>
</comment>
<comment type="catalytic activity">
    <reaction evidence="1">
        <text>orotidine 5'-phosphate + diphosphate = orotate + 5-phospho-alpha-D-ribose 1-diphosphate</text>
        <dbReference type="Rhea" id="RHEA:10380"/>
        <dbReference type="ChEBI" id="CHEBI:30839"/>
        <dbReference type="ChEBI" id="CHEBI:33019"/>
        <dbReference type="ChEBI" id="CHEBI:57538"/>
        <dbReference type="ChEBI" id="CHEBI:58017"/>
        <dbReference type="EC" id="2.4.2.10"/>
    </reaction>
</comment>
<comment type="cofactor">
    <cofactor evidence="1">
        <name>Mg(2+)</name>
        <dbReference type="ChEBI" id="CHEBI:18420"/>
    </cofactor>
</comment>
<comment type="pathway">
    <text evidence="1">Pyrimidine metabolism; UMP biosynthesis via de novo pathway; UMP from orotate: step 1/2.</text>
</comment>
<comment type="subunit">
    <text evidence="1">Homodimer.</text>
</comment>
<comment type="similarity">
    <text evidence="1">Belongs to the purine/pyrimidine phosphoribosyltransferase family. PyrE subfamily.</text>
</comment>
<feature type="chain" id="PRO_0000110708" description="Orotate phosphoribosyltransferase">
    <location>
        <begin position="1"/>
        <end position="209"/>
    </location>
</feature>
<feature type="binding site" evidence="1">
    <location>
        <position position="96"/>
    </location>
    <ligand>
        <name>5-phospho-alpha-D-ribose 1-diphosphate</name>
        <dbReference type="ChEBI" id="CHEBI:58017"/>
        <note>ligand shared between dimeric partners</note>
    </ligand>
</feature>
<feature type="binding site" evidence="1">
    <location>
        <position position="100"/>
    </location>
    <ligand>
        <name>5-phospho-alpha-D-ribose 1-diphosphate</name>
        <dbReference type="ChEBI" id="CHEBI:58017"/>
        <note>ligand shared between dimeric partners</note>
    </ligand>
</feature>
<feature type="binding site" evidence="1">
    <location>
        <position position="102"/>
    </location>
    <ligand>
        <name>5-phospho-alpha-D-ribose 1-diphosphate</name>
        <dbReference type="ChEBI" id="CHEBI:58017"/>
        <note>ligand shared between dimeric partners</note>
    </ligand>
</feature>
<feature type="binding site" description="in other chain" evidence="1">
    <location>
        <begin position="122"/>
        <end position="130"/>
    </location>
    <ligand>
        <name>5-phospho-alpha-D-ribose 1-diphosphate</name>
        <dbReference type="ChEBI" id="CHEBI:58017"/>
        <note>ligand shared between dimeric partners</note>
    </ligand>
</feature>
<feature type="binding site" evidence="1">
    <location>
        <position position="126"/>
    </location>
    <ligand>
        <name>orotate</name>
        <dbReference type="ChEBI" id="CHEBI:30839"/>
    </ligand>
</feature>
<evidence type="ECO:0000255" key="1">
    <source>
        <dbReference type="HAMAP-Rule" id="MF_01208"/>
    </source>
</evidence>
<proteinExistence type="inferred from homology"/>
<organism>
    <name type="scientific">Listeria monocytogenes serovar 1/2a (strain ATCC BAA-679 / EGD-e)</name>
    <dbReference type="NCBI Taxonomy" id="169963"/>
    <lineage>
        <taxon>Bacteria</taxon>
        <taxon>Bacillati</taxon>
        <taxon>Bacillota</taxon>
        <taxon>Bacilli</taxon>
        <taxon>Bacillales</taxon>
        <taxon>Listeriaceae</taxon>
        <taxon>Listeria</taxon>
    </lineage>
</organism>
<reference key="1">
    <citation type="journal article" date="2001" name="Science">
        <title>Comparative genomics of Listeria species.</title>
        <authorList>
            <person name="Glaser P."/>
            <person name="Frangeul L."/>
            <person name="Buchrieser C."/>
            <person name="Rusniok C."/>
            <person name="Amend A."/>
            <person name="Baquero F."/>
            <person name="Berche P."/>
            <person name="Bloecker H."/>
            <person name="Brandt P."/>
            <person name="Chakraborty T."/>
            <person name="Charbit A."/>
            <person name="Chetouani F."/>
            <person name="Couve E."/>
            <person name="de Daruvar A."/>
            <person name="Dehoux P."/>
            <person name="Domann E."/>
            <person name="Dominguez-Bernal G."/>
            <person name="Duchaud E."/>
            <person name="Durant L."/>
            <person name="Dussurget O."/>
            <person name="Entian K.-D."/>
            <person name="Fsihi H."/>
            <person name="Garcia-del Portillo F."/>
            <person name="Garrido P."/>
            <person name="Gautier L."/>
            <person name="Goebel W."/>
            <person name="Gomez-Lopez N."/>
            <person name="Hain T."/>
            <person name="Hauf J."/>
            <person name="Jackson D."/>
            <person name="Jones L.-M."/>
            <person name="Kaerst U."/>
            <person name="Kreft J."/>
            <person name="Kuhn M."/>
            <person name="Kunst F."/>
            <person name="Kurapkat G."/>
            <person name="Madueno E."/>
            <person name="Maitournam A."/>
            <person name="Mata Vicente J."/>
            <person name="Ng E."/>
            <person name="Nedjari H."/>
            <person name="Nordsiek G."/>
            <person name="Novella S."/>
            <person name="de Pablos B."/>
            <person name="Perez-Diaz J.-C."/>
            <person name="Purcell R."/>
            <person name="Remmel B."/>
            <person name="Rose M."/>
            <person name="Schlueter T."/>
            <person name="Simoes N."/>
            <person name="Tierrez A."/>
            <person name="Vazquez-Boland J.-A."/>
            <person name="Voss H."/>
            <person name="Wehland J."/>
            <person name="Cossart P."/>
        </authorList>
    </citation>
    <scope>NUCLEOTIDE SEQUENCE [LARGE SCALE GENOMIC DNA]</scope>
    <source>
        <strain>ATCC BAA-679 / EGD-e</strain>
    </source>
</reference>
<dbReference type="EC" id="2.4.2.10" evidence="1"/>
<dbReference type="EMBL" id="AL591981">
    <property type="protein sequence ID" value="CAC99909.1"/>
    <property type="molecule type" value="Genomic_DNA"/>
</dbReference>
<dbReference type="PIR" id="AG1303">
    <property type="entry name" value="AG1303"/>
</dbReference>
<dbReference type="RefSeq" id="NP_465356.1">
    <property type="nucleotide sequence ID" value="NC_003210.1"/>
</dbReference>
<dbReference type="RefSeq" id="WP_010989825.1">
    <property type="nucleotide sequence ID" value="NZ_CP149495.1"/>
</dbReference>
<dbReference type="SMR" id="Q8Y668"/>
<dbReference type="STRING" id="169963.gene:17594516"/>
<dbReference type="PaxDb" id="169963-lmo1831"/>
<dbReference type="EnsemblBacteria" id="CAC99909">
    <property type="protein sequence ID" value="CAC99909"/>
    <property type="gene ID" value="CAC99909"/>
</dbReference>
<dbReference type="GeneID" id="985882"/>
<dbReference type="KEGG" id="lmo:lmo1831"/>
<dbReference type="PATRIC" id="fig|169963.11.peg.1876"/>
<dbReference type="eggNOG" id="COG0461">
    <property type="taxonomic scope" value="Bacteria"/>
</dbReference>
<dbReference type="HOGENOM" id="CLU_074878_1_1_9"/>
<dbReference type="OrthoDB" id="9802134at2"/>
<dbReference type="PhylomeDB" id="Q8Y668"/>
<dbReference type="BioCyc" id="LMON169963:LMO1831-MONOMER"/>
<dbReference type="UniPathway" id="UPA00070">
    <property type="reaction ID" value="UER00119"/>
</dbReference>
<dbReference type="Proteomes" id="UP000000817">
    <property type="component" value="Chromosome"/>
</dbReference>
<dbReference type="GO" id="GO:0000287">
    <property type="term" value="F:magnesium ion binding"/>
    <property type="evidence" value="ECO:0007669"/>
    <property type="project" value="UniProtKB-UniRule"/>
</dbReference>
<dbReference type="GO" id="GO:0004588">
    <property type="term" value="F:orotate phosphoribosyltransferase activity"/>
    <property type="evidence" value="ECO:0000318"/>
    <property type="project" value="GO_Central"/>
</dbReference>
<dbReference type="GO" id="GO:0044205">
    <property type="term" value="P:'de novo' UMP biosynthetic process"/>
    <property type="evidence" value="ECO:0007669"/>
    <property type="project" value="UniProtKB-UniRule"/>
</dbReference>
<dbReference type="GO" id="GO:0019856">
    <property type="term" value="P:pyrimidine nucleobase biosynthetic process"/>
    <property type="evidence" value="ECO:0000318"/>
    <property type="project" value="GO_Central"/>
</dbReference>
<dbReference type="GO" id="GO:0006222">
    <property type="term" value="P:UMP biosynthetic process"/>
    <property type="evidence" value="ECO:0000318"/>
    <property type="project" value="GO_Central"/>
</dbReference>
<dbReference type="CDD" id="cd06223">
    <property type="entry name" value="PRTases_typeI"/>
    <property type="match status" value="1"/>
</dbReference>
<dbReference type="Gene3D" id="3.40.50.2020">
    <property type="match status" value="1"/>
</dbReference>
<dbReference type="HAMAP" id="MF_01208">
    <property type="entry name" value="PyrE"/>
    <property type="match status" value="1"/>
</dbReference>
<dbReference type="InterPro" id="IPR023031">
    <property type="entry name" value="OPRT"/>
</dbReference>
<dbReference type="InterPro" id="IPR004467">
    <property type="entry name" value="Or_phspho_trans_dom"/>
</dbReference>
<dbReference type="InterPro" id="IPR000836">
    <property type="entry name" value="PRibTrfase_dom"/>
</dbReference>
<dbReference type="InterPro" id="IPR029057">
    <property type="entry name" value="PRTase-like"/>
</dbReference>
<dbReference type="NCBIfam" id="TIGR00336">
    <property type="entry name" value="pyrE"/>
    <property type="match status" value="1"/>
</dbReference>
<dbReference type="PANTHER" id="PTHR19278">
    <property type="entry name" value="OROTATE PHOSPHORIBOSYLTRANSFERASE"/>
    <property type="match status" value="1"/>
</dbReference>
<dbReference type="PANTHER" id="PTHR19278:SF9">
    <property type="entry name" value="URIDINE 5'-MONOPHOSPHATE SYNTHASE"/>
    <property type="match status" value="1"/>
</dbReference>
<dbReference type="Pfam" id="PF00156">
    <property type="entry name" value="Pribosyltran"/>
    <property type="match status" value="1"/>
</dbReference>
<dbReference type="SUPFAM" id="SSF53271">
    <property type="entry name" value="PRTase-like"/>
    <property type="match status" value="1"/>
</dbReference>
<dbReference type="PROSITE" id="PS00103">
    <property type="entry name" value="PUR_PYR_PR_TRANSFER"/>
    <property type="match status" value="1"/>
</dbReference>
<sequence>MSIEKQVAEQLLEIKAVFLKPNEPFTWASGIKSPIYCDNRLTLGFPKVRQFIAKSLAEKIKQTFGEIDVVAGTATAGIPHAAWVSDLLDLPMVYVRSKAKEHGKGNQIEGPISKGQKVVVIEDLISTGGSSLKAVEALEEAGAEVVGIAAIFTYGLAKGKQLLEESGTKLVTLTNYDELIEVALNENYVTGEDMETLKEWKKNPEKWGK</sequence>
<protein>
    <recommendedName>
        <fullName evidence="1">Orotate phosphoribosyltransferase</fullName>
        <shortName evidence="1">OPRT</shortName>
        <shortName evidence="1">OPRTase</shortName>
        <ecNumber evidence="1">2.4.2.10</ecNumber>
    </recommendedName>
</protein>